<accession>P23993</accession>
<evidence type="ECO:0000255" key="1"/>
<evidence type="ECO:0000305" key="2"/>
<evidence type="ECO:0000305" key="3">
    <source>
    </source>
</evidence>
<evidence type="ECO:0007829" key="4">
    <source>
        <dbReference type="PDB" id="7EW6"/>
    </source>
</evidence>
<sequence length="209" mass="22211">MATAYAPPMASQVMKSGLACSKPRGMSGASLTRRPRFVVKAVKSDKPTYQVVQPINGDPFIGSLETPVTSSPLVAWYLSNLPAYRTAVSPLLRGIEVGLAHGYLLVGPFALTGPLRNTPVHGQAGTLGAIGLVSILSVCLTMYGVASFNEGEPSTAPVLTLTGRKKEADKLQTAEGWSQFTGGFFFGGVSGAVWAYFLLYVLDLPYFFK</sequence>
<keyword id="KW-0002">3D-structure</keyword>
<keyword id="KW-0007">Acetylation</keyword>
<keyword id="KW-0150">Chloroplast</keyword>
<keyword id="KW-0903">Direct protein sequencing</keyword>
<keyword id="KW-0472">Membrane</keyword>
<keyword id="KW-0602">Photosynthesis</keyword>
<keyword id="KW-0603">Photosystem I</keyword>
<keyword id="KW-0934">Plastid</keyword>
<keyword id="KW-0793">Thylakoid</keyword>
<keyword id="KW-0809">Transit peptide</keyword>
<keyword id="KW-0812">Transmembrane</keyword>
<keyword id="KW-1133">Transmembrane helix</keyword>
<reference key="1">
    <citation type="journal article" date="1991" name="J. Biol. Chem.">
        <title>Isolation and characterization of a cDNA clone encoding an 18-kDa hydrophobic photosystem I subunit (PSI-L) from barley (Hordeum vulgare L.).</title>
        <authorList>
            <person name="Okkels J.S."/>
            <person name="Scheller H.V."/>
            <person name="Svendsen I."/>
            <person name="Moeller B.L."/>
        </authorList>
    </citation>
    <scope>NUCLEOTIDE SEQUENCE [MRNA]</scope>
    <scope>ACETYLATION AT ALA-41</scope>
    <scope>PROTEIN SEQUENCE OF 51-70 AND 72-74</scope>
    <source>
        <strain>cv. Svalofs Bonus</strain>
    </source>
</reference>
<comment type="subcellular location">
    <subcellularLocation>
        <location evidence="2">Plastid</location>
        <location evidence="2">Chloroplast thylakoid membrane</location>
        <topology evidence="2">Multi-pass membrane protein</topology>
    </subcellularLocation>
</comment>
<comment type="induction">
    <text>By light.</text>
</comment>
<comment type="PTM">
    <text>The N-terminus is blocked.</text>
</comment>
<comment type="similarity">
    <text evidence="2">Belongs to the PsaL family.</text>
</comment>
<proteinExistence type="evidence at protein level"/>
<protein>
    <recommendedName>
        <fullName>Photosystem I reaction center subunit XI, chloroplastic</fullName>
        <shortName>PSI-L</shortName>
    </recommendedName>
    <alternativeName>
        <fullName>PSI subunit V</fullName>
    </alternativeName>
</protein>
<name>PSAL_HORVU</name>
<organism>
    <name type="scientific">Hordeum vulgare</name>
    <name type="common">Barley</name>
    <dbReference type="NCBI Taxonomy" id="4513"/>
    <lineage>
        <taxon>Eukaryota</taxon>
        <taxon>Viridiplantae</taxon>
        <taxon>Streptophyta</taxon>
        <taxon>Embryophyta</taxon>
        <taxon>Tracheophyta</taxon>
        <taxon>Spermatophyta</taxon>
        <taxon>Magnoliopsida</taxon>
        <taxon>Liliopsida</taxon>
        <taxon>Poales</taxon>
        <taxon>Poaceae</taxon>
        <taxon>BOP clade</taxon>
        <taxon>Pooideae</taxon>
        <taxon>Triticodae</taxon>
        <taxon>Triticeae</taxon>
        <taxon>Hordeinae</taxon>
        <taxon>Hordeum</taxon>
    </lineage>
</organism>
<feature type="transit peptide" description="Chloroplast" evidence="1">
    <location>
        <begin position="1"/>
        <end position="40"/>
    </location>
</feature>
<feature type="chain" id="PRO_0000029426" description="Photosystem I reaction center subunit XI, chloroplastic">
    <location>
        <begin position="41"/>
        <end position="209"/>
    </location>
</feature>
<feature type="topological domain" description="Stromal" evidence="1">
    <location>
        <begin position="41"/>
        <end position="124"/>
    </location>
</feature>
<feature type="transmembrane region" description="Helical" evidence="1">
    <location>
        <begin position="125"/>
        <end position="146"/>
    </location>
</feature>
<feature type="topological domain" description="Lumenal" evidence="1">
    <location>
        <begin position="147"/>
        <end position="179"/>
    </location>
</feature>
<feature type="transmembrane region" description="Helical" evidence="1">
    <location>
        <begin position="180"/>
        <end position="202"/>
    </location>
</feature>
<feature type="topological domain" description="Stromal" evidence="1">
    <location>
        <begin position="203"/>
        <end position="209"/>
    </location>
</feature>
<feature type="modified residue" description="N-acetylalanine" evidence="3">
    <location>
        <position position="41"/>
    </location>
</feature>
<feature type="turn" evidence="4">
    <location>
        <begin position="67"/>
        <end position="69"/>
    </location>
</feature>
<feature type="helix" evidence="4">
    <location>
        <begin position="72"/>
        <end position="77"/>
    </location>
</feature>
<feature type="helix" evidence="4">
    <location>
        <begin position="78"/>
        <end position="80"/>
    </location>
</feature>
<feature type="helix" evidence="4">
    <location>
        <begin position="82"/>
        <end position="84"/>
    </location>
</feature>
<feature type="helix" evidence="4">
    <location>
        <begin position="90"/>
        <end position="104"/>
    </location>
</feature>
<feature type="helix" evidence="4">
    <location>
        <begin position="106"/>
        <end position="112"/>
    </location>
</feature>
<feature type="turn" evidence="4">
    <location>
        <begin position="114"/>
        <end position="117"/>
    </location>
</feature>
<feature type="helix" evidence="4">
    <location>
        <begin position="121"/>
        <end position="147"/>
    </location>
</feature>
<feature type="strand" evidence="4">
    <location>
        <begin position="170"/>
        <end position="173"/>
    </location>
</feature>
<feature type="helix" evidence="4">
    <location>
        <begin position="174"/>
        <end position="199"/>
    </location>
</feature>
<feature type="strand" evidence="4">
    <location>
        <begin position="204"/>
        <end position="206"/>
    </location>
</feature>
<gene>
    <name type="primary">PSAL</name>
</gene>
<dbReference type="EMBL" id="M61146">
    <property type="protein sequence ID" value="AAA62700.1"/>
    <property type="molecule type" value="mRNA"/>
</dbReference>
<dbReference type="PIR" id="A39759">
    <property type="entry name" value="A39759"/>
</dbReference>
<dbReference type="PDB" id="7EW6">
    <property type="method" value="EM"/>
    <property type="resolution" value="3.40 A"/>
    <property type="chains" value="L=1-209"/>
</dbReference>
<dbReference type="PDB" id="7EWK">
    <property type="method" value="EM"/>
    <property type="resolution" value="3.88 A"/>
    <property type="chains" value="L=63-208"/>
</dbReference>
<dbReference type="PDB" id="7F9O">
    <property type="method" value="EM"/>
    <property type="resolution" value="4.50 A"/>
    <property type="chains" value="L/o=1-209"/>
</dbReference>
<dbReference type="PDBsum" id="7EW6"/>
<dbReference type="PDBsum" id="7EWK"/>
<dbReference type="PDBsum" id="7F9O"/>
<dbReference type="EMDB" id="EMD-31348"/>
<dbReference type="EMDB" id="EMD-31350"/>
<dbReference type="EMDB" id="EMD-31498"/>
<dbReference type="SMR" id="P23993"/>
<dbReference type="iPTMnet" id="P23993"/>
<dbReference type="OMA" id="CFTIKAI"/>
<dbReference type="ExpressionAtlas" id="P23993">
    <property type="expression patterns" value="baseline and differential"/>
</dbReference>
<dbReference type="GO" id="GO:0009535">
    <property type="term" value="C:chloroplast thylakoid membrane"/>
    <property type="evidence" value="ECO:0007669"/>
    <property type="project" value="UniProtKB-SubCell"/>
</dbReference>
<dbReference type="GO" id="GO:0009538">
    <property type="term" value="C:photosystem I reaction center"/>
    <property type="evidence" value="ECO:0007669"/>
    <property type="project" value="InterPro"/>
</dbReference>
<dbReference type="GO" id="GO:0015979">
    <property type="term" value="P:photosynthesis"/>
    <property type="evidence" value="ECO:0007669"/>
    <property type="project" value="UniProtKB-KW"/>
</dbReference>
<dbReference type="FunFam" id="1.20.1240.10:FF:000001">
    <property type="entry name" value="Photosystem I reaction center subunit XI"/>
    <property type="match status" value="1"/>
</dbReference>
<dbReference type="Gene3D" id="1.20.1240.10">
    <property type="entry name" value="Photosystem I PsaL, reaction centre subunit XI"/>
    <property type="match status" value="1"/>
</dbReference>
<dbReference type="HAMAP" id="MF_00447">
    <property type="entry name" value="PSI_PsaL"/>
    <property type="match status" value="1"/>
</dbReference>
<dbReference type="InterPro" id="IPR003757">
    <property type="entry name" value="PSI_PsaL"/>
</dbReference>
<dbReference type="InterPro" id="IPR036592">
    <property type="entry name" value="PSI_PsaL_sf"/>
</dbReference>
<dbReference type="InterPro" id="IPR022980">
    <property type="entry name" value="PSI_suXI"/>
</dbReference>
<dbReference type="PANTHER" id="PTHR34803">
    <property type="entry name" value="PHOTOSYSTEM I REACTION CENTER SUBUNIT XI, CHLOROPLASTIC"/>
    <property type="match status" value="1"/>
</dbReference>
<dbReference type="PANTHER" id="PTHR34803:SF2">
    <property type="entry name" value="PHOTOSYSTEM I REACTION CENTER SUBUNIT XI, CHLOROPLASTIC"/>
    <property type="match status" value="1"/>
</dbReference>
<dbReference type="Pfam" id="PF02605">
    <property type="entry name" value="PsaL"/>
    <property type="match status" value="1"/>
</dbReference>
<dbReference type="SUPFAM" id="SSF81568">
    <property type="entry name" value="Photosystem I reaction center subunit XI, PsaL"/>
    <property type="match status" value="1"/>
</dbReference>